<evidence type="ECO:0000255" key="1">
    <source>
        <dbReference type="HAMAP-Rule" id="MF_01684"/>
    </source>
</evidence>
<keyword id="KW-0028">Amino-acid biosynthesis</keyword>
<keyword id="KW-0378">Hydrolase</keyword>
<keyword id="KW-0486">Methionine biosynthesis</keyword>
<feature type="chain" id="PRO_1000187431" description="5'-methylthioadenosine/S-adenosylhomocysteine nucleosidase">
    <location>
        <begin position="1"/>
        <end position="230"/>
    </location>
</feature>
<feature type="active site" description="Proton acceptor" evidence="1">
    <location>
        <position position="12"/>
    </location>
</feature>
<feature type="active site" description="Proton donor" evidence="1">
    <location>
        <position position="198"/>
    </location>
</feature>
<feature type="binding site" evidence="1">
    <location>
        <position position="78"/>
    </location>
    <ligand>
        <name>substrate</name>
    </ligand>
</feature>
<feature type="binding site" evidence="1">
    <location>
        <position position="153"/>
    </location>
    <ligand>
        <name>substrate</name>
    </ligand>
</feature>
<feature type="binding site" evidence="1">
    <location>
        <begin position="174"/>
        <end position="175"/>
    </location>
    <ligand>
        <name>substrate</name>
    </ligand>
</feature>
<organism>
    <name type="scientific">Shewanella piezotolerans (strain WP3 / JCM 13877)</name>
    <dbReference type="NCBI Taxonomy" id="225849"/>
    <lineage>
        <taxon>Bacteria</taxon>
        <taxon>Pseudomonadati</taxon>
        <taxon>Pseudomonadota</taxon>
        <taxon>Gammaproteobacteria</taxon>
        <taxon>Alteromonadales</taxon>
        <taxon>Shewanellaceae</taxon>
        <taxon>Shewanella</taxon>
    </lineage>
</organism>
<proteinExistence type="inferred from homology"/>
<dbReference type="EC" id="3.2.2.9" evidence="1"/>
<dbReference type="EMBL" id="CP000472">
    <property type="protein sequence ID" value="ACJ30508.1"/>
    <property type="molecule type" value="Genomic_DNA"/>
</dbReference>
<dbReference type="RefSeq" id="WP_020913850.1">
    <property type="nucleotide sequence ID" value="NC_011566.1"/>
</dbReference>
<dbReference type="SMR" id="B8CQP2"/>
<dbReference type="STRING" id="225849.swp_3830"/>
<dbReference type="KEGG" id="swp:swp_3830"/>
<dbReference type="eggNOG" id="COG0775">
    <property type="taxonomic scope" value="Bacteria"/>
</dbReference>
<dbReference type="HOGENOM" id="CLU_031248_2_2_6"/>
<dbReference type="OrthoDB" id="9792278at2"/>
<dbReference type="UniPathway" id="UPA00904">
    <property type="reaction ID" value="UER00871"/>
</dbReference>
<dbReference type="Proteomes" id="UP000000753">
    <property type="component" value="Chromosome"/>
</dbReference>
<dbReference type="GO" id="GO:0005829">
    <property type="term" value="C:cytosol"/>
    <property type="evidence" value="ECO:0007669"/>
    <property type="project" value="TreeGrafter"/>
</dbReference>
<dbReference type="GO" id="GO:0008782">
    <property type="term" value="F:adenosylhomocysteine nucleosidase activity"/>
    <property type="evidence" value="ECO:0007669"/>
    <property type="project" value="UniProtKB-UniRule"/>
</dbReference>
<dbReference type="GO" id="GO:0008930">
    <property type="term" value="F:methylthioadenosine nucleosidase activity"/>
    <property type="evidence" value="ECO:0007669"/>
    <property type="project" value="UniProtKB-UniRule"/>
</dbReference>
<dbReference type="GO" id="GO:0019509">
    <property type="term" value="P:L-methionine salvage from methylthioadenosine"/>
    <property type="evidence" value="ECO:0007669"/>
    <property type="project" value="UniProtKB-UniRule"/>
</dbReference>
<dbReference type="GO" id="GO:0019284">
    <property type="term" value="P:L-methionine salvage from S-adenosylmethionine"/>
    <property type="evidence" value="ECO:0007669"/>
    <property type="project" value="TreeGrafter"/>
</dbReference>
<dbReference type="GO" id="GO:0009164">
    <property type="term" value="P:nucleoside catabolic process"/>
    <property type="evidence" value="ECO:0007669"/>
    <property type="project" value="InterPro"/>
</dbReference>
<dbReference type="CDD" id="cd09008">
    <property type="entry name" value="MTAN"/>
    <property type="match status" value="1"/>
</dbReference>
<dbReference type="FunFam" id="3.40.50.1580:FF:000001">
    <property type="entry name" value="MTA/SAH nucleosidase family protein"/>
    <property type="match status" value="1"/>
</dbReference>
<dbReference type="Gene3D" id="3.40.50.1580">
    <property type="entry name" value="Nucleoside phosphorylase domain"/>
    <property type="match status" value="1"/>
</dbReference>
<dbReference type="HAMAP" id="MF_01684">
    <property type="entry name" value="Salvage_MtnN"/>
    <property type="match status" value="1"/>
</dbReference>
<dbReference type="InterPro" id="IPR010049">
    <property type="entry name" value="MTA_SAH_Nsdase"/>
</dbReference>
<dbReference type="InterPro" id="IPR000845">
    <property type="entry name" value="Nucleoside_phosphorylase_d"/>
</dbReference>
<dbReference type="InterPro" id="IPR035994">
    <property type="entry name" value="Nucleoside_phosphorylase_sf"/>
</dbReference>
<dbReference type="NCBIfam" id="TIGR01704">
    <property type="entry name" value="MTA_SAH-Nsdase"/>
    <property type="match status" value="1"/>
</dbReference>
<dbReference type="NCBIfam" id="NF004079">
    <property type="entry name" value="PRK05584.1"/>
    <property type="match status" value="1"/>
</dbReference>
<dbReference type="PANTHER" id="PTHR46832">
    <property type="entry name" value="5'-METHYLTHIOADENOSINE/S-ADENOSYLHOMOCYSTEINE NUCLEOSIDASE"/>
    <property type="match status" value="1"/>
</dbReference>
<dbReference type="PANTHER" id="PTHR46832:SF1">
    <property type="entry name" value="5'-METHYLTHIOADENOSINE_S-ADENOSYLHOMOCYSTEINE NUCLEOSIDASE"/>
    <property type="match status" value="1"/>
</dbReference>
<dbReference type="Pfam" id="PF01048">
    <property type="entry name" value="PNP_UDP_1"/>
    <property type="match status" value="1"/>
</dbReference>
<dbReference type="SUPFAM" id="SSF53167">
    <property type="entry name" value="Purine and uridine phosphorylases"/>
    <property type="match status" value="1"/>
</dbReference>
<accession>B8CQP2</accession>
<sequence>MKIGIIGAMEPEVAHLVESMENSTSTTIAGIEFVAGQLAGQEVIVTRSGIGKVTASIATTLLIEKYAPDAIINTGSAGGFADDLAIGDIVISSEVRHHDVDVTAFGYEIGQMAQQPAAFLPDAKLVAAAQKAVASLGEVKAIEGLICTGDSFICDPVRTKTMLENFPTMAACEMEAAAIAQVCHQFAVPFVVIRSLSDNANDDSAVDFDEYIIKAGLHSALMVIALIKQL</sequence>
<reference key="1">
    <citation type="journal article" date="2008" name="PLoS ONE">
        <title>Environmental adaptation: genomic analysis of the piezotolerant and psychrotolerant deep-sea iron reducing bacterium Shewanella piezotolerans WP3.</title>
        <authorList>
            <person name="Wang F."/>
            <person name="Wang J."/>
            <person name="Jian H."/>
            <person name="Zhang B."/>
            <person name="Li S."/>
            <person name="Wang F."/>
            <person name="Zeng X."/>
            <person name="Gao L."/>
            <person name="Bartlett D.H."/>
            <person name="Yu J."/>
            <person name="Hu S."/>
            <person name="Xiao X."/>
        </authorList>
    </citation>
    <scope>NUCLEOTIDE SEQUENCE [LARGE SCALE GENOMIC DNA]</scope>
    <source>
        <strain>WP3 / JCM 13877</strain>
    </source>
</reference>
<name>MTNN_SHEPW</name>
<protein>
    <recommendedName>
        <fullName evidence="1">5'-methylthioadenosine/S-adenosylhomocysteine nucleosidase</fullName>
        <shortName evidence="1">MTA/SAH nucleosidase</shortName>
        <shortName evidence="1">MTAN</shortName>
        <ecNumber evidence="1">3.2.2.9</ecNumber>
    </recommendedName>
    <alternativeName>
        <fullName evidence="1">5'-deoxyadenosine nucleosidase</fullName>
        <shortName evidence="1">DOA nucleosidase</shortName>
        <shortName evidence="1">dAdo nucleosidase</shortName>
    </alternativeName>
    <alternativeName>
        <fullName evidence="1">5'-methylthioadenosine nucleosidase</fullName>
        <shortName evidence="1">MTA nucleosidase</shortName>
    </alternativeName>
    <alternativeName>
        <fullName evidence="1">S-adenosylhomocysteine nucleosidase</fullName>
        <shortName evidence="1">AdoHcy nucleosidase</shortName>
        <shortName evidence="1">SAH nucleosidase</shortName>
        <shortName evidence="1">SRH nucleosidase</shortName>
    </alternativeName>
</protein>
<comment type="function">
    <text evidence="1">Catalyzes the irreversible cleavage of the glycosidic bond in both 5'-methylthioadenosine (MTA) and S-adenosylhomocysteine (SAH/AdoHcy) to adenine and the corresponding thioribose, 5'-methylthioribose and S-ribosylhomocysteine, respectively. Also cleaves 5'-deoxyadenosine, a toxic by-product of radical S-adenosylmethionine (SAM) enzymes, into 5-deoxyribose and adenine.</text>
</comment>
<comment type="catalytic activity">
    <reaction evidence="1">
        <text>S-adenosyl-L-homocysteine + H2O = S-(5-deoxy-D-ribos-5-yl)-L-homocysteine + adenine</text>
        <dbReference type="Rhea" id="RHEA:17805"/>
        <dbReference type="ChEBI" id="CHEBI:15377"/>
        <dbReference type="ChEBI" id="CHEBI:16708"/>
        <dbReference type="ChEBI" id="CHEBI:57856"/>
        <dbReference type="ChEBI" id="CHEBI:58195"/>
        <dbReference type="EC" id="3.2.2.9"/>
    </reaction>
</comment>
<comment type="catalytic activity">
    <reaction evidence="1">
        <text>S-methyl-5'-thioadenosine + H2O = 5-(methylsulfanyl)-D-ribose + adenine</text>
        <dbReference type="Rhea" id="RHEA:13617"/>
        <dbReference type="ChEBI" id="CHEBI:15377"/>
        <dbReference type="ChEBI" id="CHEBI:16708"/>
        <dbReference type="ChEBI" id="CHEBI:17509"/>
        <dbReference type="ChEBI" id="CHEBI:78440"/>
        <dbReference type="EC" id="3.2.2.9"/>
    </reaction>
</comment>
<comment type="catalytic activity">
    <reaction evidence="1">
        <text>5'-deoxyadenosine + H2O = 5-deoxy-D-ribose + adenine</text>
        <dbReference type="Rhea" id="RHEA:29859"/>
        <dbReference type="ChEBI" id="CHEBI:15377"/>
        <dbReference type="ChEBI" id="CHEBI:16708"/>
        <dbReference type="ChEBI" id="CHEBI:17319"/>
        <dbReference type="ChEBI" id="CHEBI:149540"/>
        <dbReference type="EC" id="3.2.2.9"/>
    </reaction>
    <physiologicalReaction direction="left-to-right" evidence="1">
        <dbReference type="Rhea" id="RHEA:29860"/>
    </physiologicalReaction>
</comment>
<comment type="pathway">
    <text evidence="1">Amino-acid biosynthesis; L-methionine biosynthesis via salvage pathway; S-methyl-5-thio-alpha-D-ribose 1-phosphate from S-methyl-5'-thioadenosine (hydrolase route): step 1/2.</text>
</comment>
<comment type="similarity">
    <text evidence="1">Belongs to the PNP/UDP phosphorylase family. MtnN subfamily.</text>
</comment>
<gene>
    <name evidence="1" type="primary">mtnN</name>
    <name type="ordered locus">swp_3830</name>
</gene>